<evidence type="ECO:0000255" key="1">
    <source>
        <dbReference type="HAMAP-Rule" id="MF_00819"/>
    </source>
</evidence>
<gene>
    <name evidence="1" type="primary">spoVG</name>
    <name type="ordered locus">BB_0785</name>
</gene>
<comment type="function">
    <text evidence="1">Could be involved in septation.</text>
</comment>
<comment type="similarity">
    <text evidence="1">Belongs to the SpoVG family.</text>
</comment>
<name>SP5G_BORBU</name>
<reference key="1">
    <citation type="journal article" date="1997" name="Nature">
        <title>Genomic sequence of a Lyme disease spirochaete, Borrelia burgdorferi.</title>
        <authorList>
            <person name="Fraser C.M."/>
            <person name="Casjens S."/>
            <person name="Huang W.M."/>
            <person name="Sutton G.G."/>
            <person name="Clayton R.A."/>
            <person name="Lathigra R."/>
            <person name="White O."/>
            <person name="Ketchum K.A."/>
            <person name="Dodson R.J."/>
            <person name="Hickey E.K."/>
            <person name="Gwinn M.L."/>
            <person name="Dougherty B.A."/>
            <person name="Tomb J.-F."/>
            <person name="Fleischmann R.D."/>
            <person name="Richardson D.L."/>
            <person name="Peterson J.D."/>
            <person name="Kerlavage A.R."/>
            <person name="Quackenbush J."/>
            <person name="Salzberg S.L."/>
            <person name="Hanson M."/>
            <person name="van Vugt R."/>
            <person name="Palmer N."/>
            <person name="Adams M.D."/>
            <person name="Gocayne J.D."/>
            <person name="Weidman J.F."/>
            <person name="Utterback T.R."/>
            <person name="Watthey L."/>
            <person name="McDonald L.A."/>
            <person name="Artiach P."/>
            <person name="Bowman C."/>
            <person name="Garland S.A."/>
            <person name="Fujii C."/>
            <person name="Cotton M.D."/>
            <person name="Horst K."/>
            <person name="Roberts K.M."/>
            <person name="Hatch B."/>
            <person name="Smith H.O."/>
            <person name="Venter J.C."/>
        </authorList>
    </citation>
    <scope>NUCLEOTIDE SEQUENCE [LARGE SCALE GENOMIC DNA]</scope>
    <source>
        <strain>ATCC 35210 / DSM 4680 / CIP 102532 / B31</strain>
    </source>
</reference>
<proteinExistence type="inferred from homology"/>
<protein>
    <recommendedName>
        <fullName evidence="1">Putative septation protein SpoVG</fullName>
    </recommendedName>
</protein>
<feature type="chain" id="PRO_0000157191" description="Putative septation protein SpoVG">
    <location>
        <begin position="1"/>
        <end position="97"/>
    </location>
</feature>
<keyword id="KW-0131">Cell cycle</keyword>
<keyword id="KW-0132">Cell division</keyword>
<keyword id="KW-1185">Reference proteome</keyword>
<keyword id="KW-0717">Septation</keyword>
<dbReference type="EMBL" id="AE000783">
    <property type="protein sequence ID" value="AAC67124.1"/>
    <property type="molecule type" value="Genomic_DNA"/>
</dbReference>
<dbReference type="PIR" id="H70197">
    <property type="entry name" value="H70197"/>
</dbReference>
<dbReference type="RefSeq" id="NP_212919.1">
    <property type="nucleotide sequence ID" value="NC_001318.1"/>
</dbReference>
<dbReference type="RefSeq" id="WP_002557374.1">
    <property type="nucleotide sequence ID" value="NC_001318.1"/>
</dbReference>
<dbReference type="SMR" id="O51726"/>
<dbReference type="STRING" id="224326.BB_0785"/>
<dbReference type="PaxDb" id="224326-BB_0785"/>
<dbReference type="EnsemblBacteria" id="AAC67124">
    <property type="protein sequence ID" value="AAC67124"/>
    <property type="gene ID" value="BB_0785"/>
</dbReference>
<dbReference type="KEGG" id="bbu:BB_0785"/>
<dbReference type="PATRIC" id="fig|224326.49.peg.1177"/>
<dbReference type="HOGENOM" id="CLU_103669_2_1_12"/>
<dbReference type="OrthoDB" id="9796286at2"/>
<dbReference type="Proteomes" id="UP000001807">
    <property type="component" value="Chromosome"/>
</dbReference>
<dbReference type="GO" id="GO:0000917">
    <property type="term" value="P:division septum assembly"/>
    <property type="evidence" value="ECO:0007669"/>
    <property type="project" value="UniProtKB-KW"/>
</dbReference>
<dbReference type="GO" id="GO:0030435">
    <property type="term" value="P:sporulation resulting in formation of a cellular spore"/>
    <property type="evidence" value="ECO:0007669"/>
    <property type="project" value="InterPro"/>
</dbReference>
<dbReference type="Gene3D" id="3.30.1120.40">
    <property type="entry name" value="Stage V sporulation protein G"/>
    <property type="match status" value="1"/>
</dbReference>
<dbReference type="HAMAP" id="MF_00819">
    <property type="entry name" value="SpoVG"/>
    <property type="match status" value="1"/>
</dbReference>
<dbReference type="InterPro" id="IPR007170">
    <property type="entry name" value="SpoVG"/>
</dbReference>
<dbReference type="InterPro" id="IPR036751">
    <property type="entry name" value="SpoVG_sf"/>
</dbReference>
<dbReference type="NCBIfam" id="NF009749">
    <property type="entry name" value="PRK13259.1"/>
    <property type="match status" value="1"/>
</dbReference>
<dbReference type="PANTHER" id="PTHR38429">
    <property type="entry name" value="SEPTATION PROTEIN SPOVG-RELATED"/>
    <property type="match status" value="1"/>
</dbReference>
<dbReference type="PANTHER" id="PTHR38429:SF1">
    <property type="entry name" value="SEPTATION PROTEIN SPOVG-RELATED"/>
    <property type="match status" value="1"/>
</dbReference>
<dbReference type="Pfam" id="PF04026">
    <property type="entry name" value="SpoVG"/>
    <property type="match status" value="1"/>
</dbReference>
<dbReference type="SUPFAM" id="SSF160537">
    <property type="entry name" value="SpoVG-like"/>
    <property type="match status" value="1"/>
</dbReference>
<sequence length="97" mass="11196">MDITDIRIKKVDSKNSGSKLLAYVAVTFDNCLVLHNIRVIKGQKGVFIAMPNRRTRVGEYKDIVHPISQDFRKALQTSIFKEYIRENPADLELELDF</sequence>
<organism>
    <name type="scientific">Borreliella burgdorferi (strain ATCC 35210 / DSM 4680 / CIP 102532 / B31)</name>
    <name type="common">Borrelia burgdorferi</name>
    <dbReference type="NCBI Taxonomy" id="224326"/>
    <lineage>
        <taxon>Bacteria</taxon>
        <taxon>Pseudomonadati</taxon>
        <taxon>Spirochaetota</taxon>
        <taxon>Spirochaetia</taxon>
        <taxon>Spirochaetales</taxon>
        <taxon>Borreliaceae</taxon>
        <taxon>Borreliella</taxon>
    </lineage>
</organism>
<accession>O51726</accession>